<organism>
    <name type="scientific">Caldicellulosiruptor saccharolyticus (strain ATCC 43494 / DSM 8903 / Tp8T 6331)</name>
    <dbReference type="NCBI Taxonomy" id="351627"/>
    <lineage>
        <taxon>Bacteria</taxon>
        <taxon>Bacillati</taxon>
        <taxon>Bacillota</taxon>
        <taxon>Bacillota incertae sedis</taxon>
        <taxon>Caldicellulosiruptorales</taxon>
        <taxon>Caldicellulosiruptoraceae</taxon>
        <taxon>Caldicellulosiruptor</taxon>
    </lineage>
</organism>
<evidence type="ECO:0000255" key="1">
    <source>
        <dbReference type="HAMAP-Rule" id="MF_00338"/>
    </source>
</evidence>
<dbReference type="EMBL" id="CP000679">
    <property type="protein sequence ID" value="ABP66390.1"/>
    <property type="molecule type" value="Genomic_DNA"/>
</dbReference>
<dbReference type="RefSeq" id="WP_011916337.1">
    <property type="nucleotide sequence ID" value="NC_009437.1"/>
</dbReference>
<dbReference type="SMR" id="A4XHK5"/>
<dbReference type="STRING" id="351627.Csac_0771"/>
<dbReference type="KEGG" id="csc:Csac_0771"/>
<dbReference type="eggNOG" id="COG0393">
    <property type="taxonomic scope" value="Bacteria"/>
</dbReference>
<dbReference type="HOGENOM" id="CLU_117144_3_2_9"/>
<dbReference type="OrthoDB" id="9796448at2"/>
<dbReference type="Proteomes" id="UP000000256">
    <property type="component" value="Chromosome"/>
</dbReference>
<dbReference type="Gene3D" id="3.30.110.70">
    <property type="entry name" value="Hypothetical protein apc22750. Chain B"/>
    <property type="match status" value="1"/>
</dbReference>
<dbReference type="HAMAP" id="MF_00338">
    <property type="entry name" value="UPF0145"/>
    <property type="match status" value="1"/>
</dbReference>
<dbReference type="InterPro" id="IPR035439">
    <property type="entry name" value="UPF0145_dom_sf"/>
</dbReference>
<dbReference type="InterPro" id="IPR002765">
    <property type="entry name" value="UPF0145_YbjQ-like"/>
</dbReference>
<dbReference type="PANTHER" id="PTHR34068">
    <property type="entry name" value="UPF0145 PROTEIN YBJQ"/>
    <property type="match status" value="1"/>
</dbReference>
<dbReference type="PANTHER" id="PTHR34068:SF1">
    <property type="entry name" value="UPF0145 PROTEIN YBJQ"/>
    <property type="match status" value="1"/>
</dbReference>
<dbReference type="Pfam" id="PF01906">
    <property type="entry name" value="YbjQ_1"/>
    <property type="match status" value="1"/>
</dbReference>
<dbReference type="SUPFAM" id="SSF117782">
    <property type="entry name" value="YbjQ-like"/>
    <property type="match status" value="1"/>
</dbReference>
<proteinExistence type="inferred from homology"/>
<sequence length="106" mass="11264">MIVTTTPSIEGKKIVDYKGIVSSEVIVGVNLVKDFIASITDIFGGRSGTYENELIRAREEALQELQNRAAMLGANAVVGIDIDYEVLGTNGSMLMVSVTGTAVVVE</sequence>
<comment type="similarity">
    <text evidence="1">Belongs to the UPF0145 family.</text>
</comment>
<reference key="1">
    <citation type="submission" date="2007-04" db="EMBL/GenBank/DDBJ databases">
        <title>Genome sequence of the thermophilic hydrogen-producing bacterium Caldicellulosiruptor saccharolyticus DSM 8903.</title>
        <authorList>
            <person name="Copeland A."/>
            <person name="Lucas S."/>
            <person name="Lapidus A."/>
            <person name="Barry K."/>
            <person name="Detter J.C."/>
            <person name="Glavina del Rio T."/>
            <person name="Hammon N."/>
            <person name="Israni S."/>
            <person name="Dalin E."/>
            <person name="Tice H."/>
            <person name="Pitluck S."/>
            <person name="Kiss H."/>
            <person name="Brettin T."/>
            <person name="Bruce D."/>
            <person name="Han C."/>
            <person name="Schmutz J."/>
            <person name="Larimer F."/>
            <person name="Land M."/>
            <person name="Hauser L."/>
            <person name="Kyrpides N."/>
            <person name="Lykidis A."/>
            <person name="van de Werken H.J.G."/>
            <person name="Verhaart M.R.A."/>
            <person name="VanFossen A.L."/>
            <person name="Lewis D.L."/>
            <person name="Nichols J.D."/>
            <person name="Goorissen H.P."/>
            <person name="van Niel E.W.J."/>
            <person name="Stams F.J.M."/>
            <person name="Willquist K.U."/>
            <person name="Ward D.E."/>
            <person name="van der Oost J."/>
            <person name="Kelly R.M."/>
            <person name="Kengen S.M.W."/>
            <person name="Richardson P."/>
        </authorList>
    </citation>
    <scope>NUCLEOTIDE SEQUENCE [LARGE SCALE GENOMIC DNA]</scope>
    <source>
        <strain>ATCC 43494 / DSM 8903 / Tp8T 6331</strain>
    </source>
</reference>
<accession>A4XHK5</accession>
<protein>
    <recommendedName>
        <fullName evidence="1">UPF0145 protein Csac_0771</fullName>
    </recommendedName>
</protein>
<gene>
    <name type="ordered locus">Csac_0771</name>
</gene>
<name>Y771_CALS8</name>
<feature type="chain" id="PRO_1000012986" description="UPF0145 protein Csac_0771">
    <location>
        <begin position="1"/>
        <end position="106"/>
    </location>
</feature>